<feature type="chain" id="PRO_1000052113" description="Large ribosomal subunit protein uL3">
    <location>
        <begin position="1"/>
        <end position="211"/>
    </location>
</feature>
<feature type="modified residue" description="N5-methylglutamine" evidence="1">
    <location>
        <position position="150"/>
    </location>
</feature>
<gene>
    <name evidence="1" type="primary">rplC</name>
    <name type="ordered locus">PA14_08850</name>
</gene>
<reference key="1">
    <citation type="journal article" date="2006" name="Genome Biol.">
        <title>Genomic analysis reveals that Pseudomonas aeruginosa virulence is combinatorial.</title>
        <authorList>
            <person name="Lee D.G."/>
            <person name="Urbach J.M."/>
            <person name="Wu G."/>
            <person name="Liberati N.T."/>
            <person name="Feinbaum R.L."/>
            <person name="Miyata S."/>
            <person name="Diggins L.T."/>
            <person name="He J."/>
            <person name="Saucier M."/>
            <person name="Deziel E."/>
            <person name="Friedman L."/>
            <person name="Li L."/>
            <person name="Grills G."/>
            <person name="Montgomery K."/>
            <person name="Kucherlapati R."/>
            <person name="Rahme L.G."/>
            <person name="Ausubel F.M."/>
        </authorList>
    </citation>
    <scope>NUCLEOTIDE SEQUENCE [LARGE SCALE GENOMIC DNA]</scope>
    <source>
        <strain>UCBPP-PA14</strain>
    </source>
</reference>
<comment type="function">
    <text evidence="1">One of the primary rRNA binding proteins, it binds directly near the 3'-end of the 23S rRNA, where it nucleates assembly of the 50S subunit.</text>
</comment>
<comment type="subunit">
    <text evidence="1">Part of the 50S ribosomal subunit. Forms a cluster with proteins L14 and L19.</text>
</comment>
<comment type="PTM">
    <text evidence="1">Methylated by PrmB.</text>
</comment>
<comment type="similarity">
    <text evidence="1">Belongs to the universal ribosomal protein uL3 family.</text>
</comment>
<organism>
    <name type="scientific">Pseudomonas aeruginosa (strain UCBPP-PA14)</name>
    <dbReference type="NCBI Taxonomy" id="208963"/>
    <lineage>
        <taxon>Bacteria</taxon>
        <taxon>Pseudomonadati</taxon>
        <taxon>Pseudomonadota</taxon>
        <taxon>Gammaproteobacteria</taxon>
        <taxon>Pseudomonadales</taxon>
        <taxon>Pseudomonadaceae</taxon>
        <taxon>Pseudomonas</taxon>
    </lineage>
</organism>
<accession>Q02T80</accession>
<evidence type="ECO:0000255" key="1">
    <source>
        <dbReference type="HAMAP-Rule" id="MF_01325"/>
    </source>
</evidence>
<evidence type="ECO:0000305" key="2"/>
<protein>
    <recommendedName>
        <fullName evidence="1">Large ribosomal subunit protein uL3</fullName>
    </recommendedName>
    <alternativeName>
        <fullName evidence="2">50S ribosomal protein L3</fullName>
    </alternativeName>
</protein>
<proteinExistence type="inferred from homology"/>
<sequence length="211" mass="22592">MTIGVVGRKCGMTRIFTEEGVSIPVTVIEVEPNRVTQFKTEETDGYRAVQVTAGERRASRVTKAQAGHFAKANVAAGRGVWEFRLGEEQYAAGDQITVDLFQAGQMVDVTGESKGKGFAGTIKRWNFRGQDNTHGNSVSHRVPGSIGQCQTPGRVFKGKKMSGHLGAERVTVQSLEIVRVDAERNLLLVKGAVPGATGGDVIVRPAAKARG</sequence>
<keyword id="KW-0488">Methylation</keyword>
<keyword id="KW-0687">Ribonucleoprotein</keyword>
<keyword id="KW-0689">Ribosomal protein</keyword>
<keyword id="KW-0694">RNA-binding</keyword>
<keyword id="KW-0699">rRNA-binding</keyword>
<name>RL3_PSEAB</name>
<dbReference type="EMBL" id="CP000438">
    <property type="protein sequence ID" value="ABJ13534.1"/>
    <property type="molecule type" value="Genomic_DNA"/>
</dbReference>
<dbReference type="RefSeq" id="WP_003103877.1">
    <property type="nucleotide sequence ID" value="NZ_CP034244.1"/>
</dbReference>
<dbReference type="SMR" id="Q02T80"/>
<dbReference type="GeneID" id="77219198"/>
<dbReference type="KEGG" id="pau:PA14_08850"/>
<dbReference type="PseudoCAP" id="PA14_08850"/>
<dbReference type="HOGENOM" id="CLU_044142_4_1_6"/>
<dbReference type="BioCyc" id="PAER208963:G1G74-736-MONOMER"/>
<dbReference type="Proteomes" id="UP000000653">
    <property type="component" value="Chromosome"/>
</dbReference>
<dbReference type="GO" id="GO:0022625">
    <property type="term" value="C:cytosolic large ribosomal subunit"/>
    <property type="evidence" value="ECO:0007669"/>
    <property type="project" value="TreeGrafter"/>
</dbReference>
<dbReference type="GO" id="GO:0019843">
    <property type="term" value="F:rRNA binding"/>
    <property type="evidence" value="ECO:0007669"/>
    <property type="project" value="UniProtKB-UniRule"/>
</dbReference>
<dbReference type="GO" id="GO:0003735">
    <property type="term" value="F:structural constituent of ribosome"/>
    <property type="evidence" value="ECO:0007669"/>
    <property type="project" value="InterPro"/>
</dbReference>
<dbReference type="GO" id="GO:0006412">
    <property type="term" value="P:translation"/>
    <property type="evidence" value="ECO:0007669"/>
    <property type="project" value="UniProtKB-UniRule"/>
</dbReference>
<dbReference type="FunFam" id="2.40.30.10:FF:000004">
    <property type="entry name" value="50S ribosomal protein L3"/>
    <property type="match status" value="1"/>
</dbReference>
<dbReference type="FunFam" id="3.30.160.810:FF:000001">
    <property type="entry name" value="50S ribosomal protein L3"/>
    <property type="match status" value="1"/>
</dbReference>
<dbReference type="Gene3D" id="3.30.160.810">
    <property type="match status" value="1"/>
</dbReference>
<dbReference type="Gene3D" id="2.40.30.10">
    <property type="entry name" value="Translation factors"/>
    <property type="match status" value="1"/>
</dbReference>
<dbReference type="HAMAP" id="MF_01325_B">
    <property type="entry name" value="Ribosomal_uL3_B"/>
    <property type="match status" value="1"/>
</dbReference>
<dbReference type="InterPro" id="IPR000597">
    <property type="entry name" value="Ribosomal_uL3"/>
</dbReference>
<dbReference type="InterPro" id="IPR019927">
    <property type="entry name" value="Ribosomal_uL3_bac/org-type"/>
</dbReference>
<dbReference type="InterPro" id="IPR019926">
    <property type="entry name" value="Ribosomal_uL3_CS"/>
</dbReference>
<dbReference type="InterPro" id="IPR009000">
    <property type="entry name" value="Transl_B-barrel_sf"/>
</dbReference>
<dbReference type="NCBIfam" id="TIGR03625">
    <property type="entry name" value="L3_bact"/>
    <property type="match status" value="1"/>
</dbReference>
<dbReference type="PANTHER" id="PTHR11229">
    <property type="entry name" value="50S RIBOSOMAL PROTEIN L3"/>
    <property type="match status" value="1"/>
</dbReference>
<dbReference type="PANTHER" id="PTHR11229:SF16">
    <property type="entry name" value="LARGE RIBOSOMAL SUBUNIT PROTEIN UL3C"/>
    <property type="match status" value="1"/>
</dbReference>
<dbReference type="Pfam" id="PF00297">
    <property type="entry name" value="Ribosomal_L3"/>
    <property type="match status" value="1"/>
</dbReference>
<dbReference type="SUPFAM" id="SSF50447">
    <property type="entry name" value="Translation proteins"/>
    <property type="match status" value="1"/>
</dbReference>
<dbReference type="PROSITE" id="PS00474">
    <property type="entry name" value="RIBOSOMAL_L3"/>
    <property type="match status" value="1"/>
</dbReference>